<protein>
    <recommendedName>
        <fullName evidence="8">T cell receptor beta variable 6-4</fullName>
    </recommendedName>
</protein>
<organism>
    <name type="scientific">Homo sapiens</name>
    <name type="common">Human</name>
    <dbReference type="NCBI Taxonomy" id="9606"/>
    <lineage>
        <taxon>Eukaryota</taxon>
        <taxon>Metazoa</taxon>
        <taxon>Chordata</taxon>
        <taxon>Craniata</taxon>
        <taxon>Vertebrata</taxon>
        <taxon>Euteleostomi</taxon>
        <taxon>Mammalia</taxon>
        <taxon>Eutheria</taxon>
        <taxon>Euarchontoglires</taxon>
        <taxon>Primates</taxon>
        <taxon>Haplorrhini</taxon>
        <taxon>Catarrhini</taxon>
        <taxon>Hominidae</taxon>
        <taxon>Homo</taxon>
    </lineage>
</organism>
<dbReference type="EMBL" id="AC245088">
    <property type="status" value="NOT_ANNOTATED_CDS"/>
    <property type="molecule type" value="Genomic_DNA"/>
</dbReference>
<dbReference type="SMR" id="A0A1B0GX49"/>
<dbReference type="FunCoup" id="A0A1B0GX49">
    <property type="interactions" value="366"/>
</dbReference>
<dbReference type="IMGT_GENE-DB" id="TRBV6-4"/>
<dbReference type="BioMuta" id="TRBV6-4"/>
<dbReference type="MassIVE" id="A0A1B0GX49"/>
<dbReference type="Ensembl" id="ENST00000390360.3">
    <property type="protein sequence ID" value="ENSP00000374883.3"/>
    <property type="gene ID" value="ENSG00000211713.3"/>
</dbReference>
<dbReference type="AGR" id="HGNC:12229"/>
<dbReference type="GeneCards" id="TRBV6-4"/>
<dbReference type="HGNC" id="HGNC:12229">
    <property type="gene designation" value="TRBV6-4"/>
</dbReference>
<dbReference type="HPA" id="ENSG00000211713">
    <property type="expression patterns" value="Tissue enhanced (lymphoid)"/>
</dbReference>
<dbReference type="neXtProt" id="NX_A0A1B0GX49"/>
<dbReference type="OpenTargets" id="ENSG00000211713"/>
<dbReference type="VEuPathDB" id="HostDB:ENSG00000211713"/>
<dbReference type="GeneTree" id="ENSGT00940000154542"/>
<dbReference type="InParanoid" id="A0A1B0GX49"/>
<dbReference type="OMA" id="PRNQITR"/>
<dbReference type="OrthoDB" id="9049585at2759"/>
<dbReference type="PAN-GO" id="A0A1B0GX49">
    <property type="GO annotations" value="2 GO annotations based on evolutionary models"/>
</dbReference>
<dbReference type="ChiTaRS" id="TRBV6-4">
    <property type="organism name" value="human"/>
</dbReference>
<dbReference type="Pharos" id="A0A1B0GX49">
    <property type="development level" value="Tdark"/>
</dbReference>
<dbReference type="PRO" id="PR:A0A1B0GX49"/>
<dbReference type="Proteomes" id="UP000005640">
    <property type="component" value="Chromosome 7"/>
</dbReference>
<dbReference type="RNAct" id="A0A1B0GX49">
    <property type="molecule type" value="protein"/>
</dbReference>
<dbReference type="Bgee" id="ENSG00000211713">
    <property type="expression patterns" value="Expressed in primordial germ cell in gonad and 61 other cell types or tissues"/>
</dbReference>
<dbReference type="GO" id="GO:0005886">
    <property type="term" value="C:plasma membrane"/>
    <property type="evidence" value="ECO:0000318"/>
    <property type="project" value="GO_Central"/>
</dbReference>
<dbReference type="GO" id="GO:0042101">
    <property type="term" value="C:T cell receptor complex"/>
    <property type="evidence" value="ECO:0007669"/>
    <property type="project" value="UniProtKB-KW"/>
</dbReference>
<dbReference type="GO" id="GO:0002250">
    <property type="term" value="P:adaptive immune response"/>
    <property type="evidence" value="ECO:0007669"/>
    <property type="project" value="UniProtKB-KW"/>
</dbReference>
<dbReference type="GO" id="GO:0007166">
    <property type="term" value="P:cell surface receptor signaling pathway"/>
    <property type="evidence" value="ECO:0000318"/>
    <property type="project" value="GO_Central"/>
</dbReference>
<dbReference type="Gene3D" id="2.60.40.10">
    <property type="entry name" value="Immunoglobulins"/>
    <property type="match status" value="1"/>
</dbReference>
<dbReference type="InterPro" id="IPR007110">
    <property type="entry name" value="Ig-like_dom"/>
</dbReference>
<dbReference type="InterPro" id="IPR036179">
    <property type="entry name" value="Ig-like_dom_sf"/>
</dbReference>
<dbReference type="InterPro" id="IPR013783">
    <property type="entry name" value="Ig-like_fold"/>
</dbReference>
<dbReference type="InterPro" id="IPR013106">
    <property type="entry name" value="Ig_V-set"/>
</dbReference>
<dbReference type="InterPro" id="IPR050413">
    <property type="entry name" value="TCR_beta_variable"/>
</dbReference>
<dbReference type="PANTHER" id="PTHR23268:SF19">
    <property type="entry name" value="T CELL RECEPTOR BETA VARIABLE 6-2-RELATED"/>
    <property type="match status" value="1"/>
</dbReference>
<dbReference type="PANTHER" id="PTHR23268">
    <property type="entry name" value="T-CELL RECEPTOR BETA CHAIN"/>
    <property type="match status" value="1"/>
</dbReference>
<dbReference type="Pfam" id="PF07686">
    <property type="entry name" value="V-set"/>
    <property type="match status" value="1"/>
</dbReference>
<dbReference type="SMART" id="SM00406">
    <property type="entry name" value="IGv"/>
    <property type="match status" value="1"/>
</dbReference>
<dbReference type="SUPFAM" id="SSF48726">
    <property type="entry name" value="Immunoglobulin"/>
    <property type="match status" value="1"/>
</dbReference>
<dbReference type="PROSITE" id="PS50835">
    <property type="entry name" value="IG_LIKE"/>
    <property type="match status" value="1"/>
</dbReference>
<keyword id="KW-1064">Adaptive immunity</keyword>
<keyword id="KW-1003">Cell membrane</keyword>
<keyword id="KW-1015">Disulfide bond</keyword>
<keyword id="KW-0391">Immunity</keyword>
<keyword id="KW-0393">Immunoglobulin domain</keyword>
<keyword id="KW-0472">Membrane</keyword>
<keyword id="KW-1267">Proteomics identification</keyword>
<keyword id="KW-0675">Receptor</keyword>
<keyword id="KW-1185">Reference proteome</keyword>
<keyword id="KW-0732">Signal</keyword>
<keyword id="KW-1279">T cell receptor</keyword>
<proteinExistence type="evidence at protein level"/>
<accession>A0A1B0GX49</accession>
<comment type="function">
    <text evidence="3 5 6 7">V region of the variable domain of T cell receptor (TR) beta chain that participates in the antigen recognition (PubMed:24600447). Alpha-beta T cell receptors are antigen specific receptors which are essential to the immune response and are present on the cell surface of T lymphocytes. Recognize peptide-major histocompatibility (MH) (pMH) complexes that are displayed by antigen presenting cells (APC), a prerequisite for efficient T cell adaptive immunity against pathogens (PubMed:25493333). Binding of alpha-beta TR to pMH complex initiates TR-CD3 clustering on the cell surface and intracellular activation of LCK that phosphorylates the ITAM motifs of CD3G, CD3D, CD3E and CD247 enabling the recruitment of ZAP70. In turn ZAP70 phosphorylates LAT, which recruits numerous signaling molecules to form the LAT signalosome. The LAT signalosome propagates signal branching to three major signaling pathways, the calcium, the mitogen-activated protein kinase (MAPK) kinase and the nuclear factor NF-kappa-B (NF-kB) pathways, leading to the mobilization of transcription factors that are critical for gene expression and essential for T cell growth and differentiation (PubMed:23524462). The T cell repertoire is generated in the thymus, by V-(D)-J rearrangement. This repertoire is then shaped by intrathymic selection events to generate a peripheral T cell pool of self-MH restricted, non-autoaggressive T cells. Post-thymic interaction of alpha-beta TR with the pMH complexes shapes TR structural and functional avidity (PubMed:15040585).</text>
</comment>
<comment type="subunit">
    <text evidence="4">Alpha-beta TR is a heterodimer composed of an alpha and beta chain; disulfide-linked. The alpha-beta TR is associated with the transmembrane signaling CD3 coreceptor proteins to form the TR-CD3 (TcR or TCR). The assembly of alpha-beta TR heterodimers with CD3 occurs in the endoplasmic reticulum where a single alpha-beta TR heterodimer associates with one CD3D-CD3E heterodimer, one CD3G-CD3E heterodimer and one CD247 homodimer forming a stable octameric structure. CD3D-CD3E and CD3G-CD3E heterodimers preferentially associate with TR alpha and TR beta chains, respectively. The association of the CD247 homodimer is the last step of TcR assembly in the endoplasmic reticulum and is required for transport to the cell surface.</text>
</comment>
<comment type="subcellular location">
    <subcellularLocation>
        <location evidence="4">Cell membrane</location>
    </subcellularLocation>
</comment>
<comment type="polymorphism">
    <text evidence="9">There are several alleles. The sequence shown is that of IMGT allele TRBV6-4*02.</text>
</comment>
<evidence type="ECO:0000255" key="1"/>
<evidence type="ECO:0000255" key="2">
    <source>
        <dbReference type="PROSITE-ProRule" id="PRU00114"/>
    </source>
</evidence>
<evidence type="ECO:0000303" key="3">
    <source>
    </source>
</evidence>
<evidence type="ECO:0000303" key="4">
    <source>
    </source>
</evidence>
<evidence type="ECO:0000303" key="5">
    <source>
    </source>
</evidence>
<evidence type="ECO:0000303" key="6">
    <source>
    </source>
</evidence>
<evidence type="ECO:0000303" key="7">
    <source>
    </source>
</evidence>
<evidence type="ECO:0000303" key="8">
    <source ref="2"/>
</evidence>
<evidence type="ECO:0000305" key="9"/>
<gene>
    <name evidence="8" type="primary">TRBV6-4</name>
</gene>
<sequence>MSIRLLCCVAFSLLWAGPVTAGITQAPTSQILAAGRSMTLRCTQDMRHNAMYWYRQDLGLGLRLIHYSNTAGTTGKGEVPDGYSVSRANTDDFPLTLASAVPSQTSVYFCASSD</sequence>
<feature type="signal peptide" evidence="1">
    <location>
        <begin position="1"/>
        <end position="21"/>
    </location>
</feature>
<feature type="chain" id="PRO_5008408768" description="T cell receptor beta variable 6-4" evidence="1">
    <location>
        <begin position="22"/>
        <end position="114"/>
    </location>
</feature>
<feature type="domain" description="Ig-like" evidence="2">
    <location>
        <begin position="22"/>
        <end position="114" status="greater than"/>
    </location>
</feature>
<feature type="disulfide bond" evidence="2">
    <location>
        <begin position="42"/>
        <end position="110"/>
    </location>
</feature>
<feature type="non-terminal residue">
    <location>
        <position position="114"/>
    </location>
</feature>
<reference key="1">
    <citation type="journal article" date="2003" name="Nature">
        <title>The DNA sequence of human chromosome 7.</title>
        <authorList>
            <person name="Hillier L.W."/>
            <person name="Fulton R.S."/>
            <person name="Fulton L.A."/>
            <person name="Graves T.A."/>
            <person name="Pepin K.H."/>
            <person name="Wagner-McPherson C."/>
            <person name="Layman D."/>
            <person name="Maas J."/>
            <person name="Jaeger S."/>
            <person name="Walker R."/>
            <person name="Wylie K."/>
            <person name="Sekhon M."/>
            <person name="Becker M.C."/>
            <person name="O'Laughlin M.D."/>
            <person name="Schaller M.E."/>
            <person name="Fewell G.A."/>
            <person name="Delehaunty K.D."/>
            <person name="Miner T.L."/>
            <person name="Nash W.E."/>
            <person name="Cordes M."/>
            <person name="Du H."/>
            <person name="Sun H."/>
            <person name="Edwards J."/>
            <person name="Bradshaw-Cordum H."/>
            <person name="Ali J."/>
            <person name="Andrews S."/>
            <person name="Isak A."/>
            <person name="Vanbrunt A."/>
            <person name="Nguyen C."/>
            <person name="Du F."/>
            <person name="Lamar B."/>
            <person name="Courtney L."/>
            <person name="Kalicki J."/>
            <person name="Ozersky P."/>
            <person name="Bielicki L."/>
            <person name="Scott K."/>
            <person name="Holmes A."/>
            <person name="Harkins R."/>
            <person name="Harris A."/>
            <person name="Strong C.M."/>
            <person name="Hou S."/>
            <person name="Tomlinson C."/>
            <person name="Dauphin-Kohlberg S."/>
            <person name="Kozlowicz-Reilly A."/>
            <person name="Leonard S."/>
            <person name="Rohlfing T."/>
            <person name="Rock S.M."/>
            <person name="Tin-Wollam A.-M."/>
            <person name="Abbott A."/>
            <person name="Minx P."/>
            <person name="Maupin R."/>
            <person name="Strowmatt C."/>
            <person name="Latreille P."/>
            <person name="Miller N."/>
            <person name="Johnson D."/>
            <person name="Murray J."/>
            <person name="Woessner J.P."/>
            <person name="Wendl M.C."/>
            <person name="Yang S.-P."/>
            <person name="Schultz B.R."/>
            <person name="Wallis J.W."/>
            <person name="Spieth J."/>
            <person name="Bieri T.A."/>
            <person name="Nelson J.O."/>
            <person name="Berkowicz N."/>
            <person name="Wohldmann P.E."/>
            <person name="Cook L.L."/>
            <person name="Hickenbotham M.T."/>
            <person name="Eldred J."/>
            <person name="Williams D."/>
            <person name="Bedell J.A."/>
            <person name="Mardis E.R."/>
            <person name="Clifton S.W."/>
            <person name="Chissoe S.L."/>
            <person name="Marra M.A."/>
            <person name="Raymond C."/>
            <person name="Haugen E."/>
            <person name="Gillett W."/>
            <person name="Zhou Y."/>
            <person name="James R."/>
            <person name="Phelps K."/>
            <person name="Iadanoto S."/>
            <person name="Bubb K."/>
            <person name="Simms E."/>
            <person name="Levy R."/>
            <person name="Clendenning J."/>
            <person name="Kaul R."/>
            <person name="Kent W.J."/>
            <person name="Furey T.S."/>
            <person name="Baertsch R.A."/>
            <person name="Brent M.R."/>
            <person name="Keibler E."/>
            <person name="Flicek P."/>
            <person name="Bork P."/>
            <person name="Suyama M."/>
            <person name="Bailey J.A."/>
            <person name="Portnoy M.E."/>
            <person name="Torrents D."/>
            <person name="Chinwalla A.T."/>
            <person name="Gish W.R."/>
            <person name="Eddy S.R."/>
            <person name="McPherson J.D."/>
            <person name="Olson M.V."/>
            <person name="Eichler E.E."/>
            <person name="Green E.D."/>
            <person name="Waterston R.H."/>
            <person name="Wilson R.K."/>
        </authorList>
    </citation>
    <scope>NUCLEOTIDE SEQUENCE [LARGE SCALE GENOMIC DNA] (IMGT ALLELE TRBV6-4*02)</scope>
</reference>
<reference key="2">
    <citation type="book" date="2001" name="The T Cell Receptor FactsBook.">
        <title>The T Cell Receptor FactsBook.</title>
        <editorList>
            <person name="Lefranc M.P."/>
            <person name="Lefranc G."/>
        </editorList>
        <authorList>
            <person name="Lefranc M.P."/>
            <person name="Lefranc G."/>
        </authorList>
    </citation>
    <scope>NOMENCLATURE</scope>
</reference>
<reference key="3">
    <citation type="journal article" date="2004" name="Nat. Rev. Immunol.">
        <title>The many important facets of T-cell repertoire diversity.</title>
        <authorList>
            <person name="Nikolich-Zugich J."/>
            <person name="Slifka M.K."/>
            <person name="Messaoudi I."/>
        </authorList>
    </citation>
    <scope>REVIEW ON T CELL REPERTOIRE DIVERSITY</scope>
</reference>
<reference key="4">
    <citation type="journal article" date="2010" name="Cold Spring Harb. Perspect. Biol.">
        <title>Structural biology of the T-cell receptor: insights into receptor assembly, ligand recognition, and initiation of signaling.</title>
        <authorList>
            <person name="Wucherpfennig K.W."/>
            <person name="Gagnon E."/>
            <person name="Call M.J."/>
            <person name="Huseby E.S."/>
            <person name="Call M.E."/>
        </authorList>
    </citation>
    <scope>REVIEW ON T CELL RECEPTOR-CD3 COMPLEX ASSEMBLY</scope>
    <scope>SUBCELLULAR LOCATION</scope>
</reference>
<reference key="5">
    <citation type="journal article" date="2013" name="Nat. Rev. Immunol.">
        <title>T cell receptor signalling networks: branched, diversified and bounded.</title>
        <authorList>
            <person name="Brownlie R.J."/>
            <person name="Zamoyska R."/>
        </authorList>
    </citation>
    <scope>REVIEW ON T CELL RECEPTOR SIGNALING</scope>
</reference>
<reference key="6">
    <citation type="journal article" date="2014" name="Front. Immunol.">
        <title>Immunoglobulin and T Cell Receptor Genes: IMGT((R)) and the Birth and Rise of Immunoinformatics.</title>
        <authorList>
            <person name="Lefranc M.P."/>
        </authorList>
    </citation>
    <scope>NOMENCLATURE</scope>
</reference>
<reference key="7">
    <citation type="journal article" date="2015" name="Annu. Rev. Immunol.">
        <title>T cell antigen receptor recognition of antigen-presenting molecules.</title>
        <authorList>
            <person name="Rossjohn J."/>
            <person name="Gras S."/>
            <person name="Miles J.J."/>
            <person name="Turner S.J."/>
            <person name="Godfrey D.I."/>
            <person name="McCluskey J."/>
        </authorList>
    </citation>
    <scope>REVIEW ON FUNCTION</scope>
</reference>
<name>TVB64_HUMAN</name>